<feature type="chain" id="PRO_0000225520" description="DNA-directed RNA polymerase subunit beta'">
    <location>
        <begin position="1"/>
        <end position="1414"/>
    </location>
</feature>
<feature type="region of interest" description="Disordered" evidence="2">
    <location>
        <begin position="1391"/>
        <end position="1414"/>
    </location>
</feature>
<feature type="compositionally biased region" description="Low complexity" evidence="2">
    <location>
        <begin position="1400"/>
        <end position="1414"/>
    </location>
</feature>
<feature type="binding site" evidence="1">
    <location>
        <position position="70"/>
    </location>
    <ligand>
        <name>Zn(2+)</name>
        <dbReference type="ChEBI" id="CHEBI:29105"/>
        <label>1</label>
    </ligand>
</feature>
<feature type="binding site" evidence="1">
    <location>
        <position position="72"/>
    </location>
    <ligand>
        <name>Zn(2+)</name>
        <dbReference type="ChEBI" id="CHEBI:29105"/>
        <label>1</label>
    </ligand>
</feature>
<feature type="binding site" evidence="1">
    <location>
        <position position="85"/>
    </location>
    <ligand>
        <name>Zn(2+)</name>
        <dbReference type="ChEBI" id="CHEBI:29105"/>
        <label>1</label>
    </ligand>
</feature>
<feature type="binding site" evidence="1">
    <location>
        <position position="88"/>
    </location>
    <ligand>
        <name>Zn(2+)</name>
        <dbReference type="ChEBI" id="CHEBI:29105"/>
        <label>1</label>
    </ligand>
</feature>
<feature type="binding site" evidence="1">
    <location>
        <position position="460"/>
    </location>
    <ligand>
        <name>Mg(2+)</name>
        <dbReference type="ChEBI" id="CHEBI:18420"/>
    </ligand>
</feature>
<feature type="binding site" evidence="1">
    <location>
        <position position="462"/>
    </location>
    <ligand>
        <name>Mg(2+)</name>
        <dbReference type="ChEBI" id="CHEBI:18420"/>
    </ligand>
</feature>
<feature type="binding site" evidence="1">
    <location>
        <position position="464"/>
    </location>
    <ligand>
        <name>Mg(2+)</name>
        <dbReference type="ChEBI" id="CHEBI:18420"/>
    </ligand>
</feature>
<feature type="binding site" evidence="1">
    <location>
        <position position="819"/>
    </location>
    <ligand>
        <name>Zn(2+)</name>
        <dbReference type="ChEBI" id="CHEBI:29105"/>
        <label>2</label>
    </ligand>
</feature>
<feature type="binding site" evidence="1">
    <location>
        <position position="893"/>
    </location>
    <ligand>
        <name>Zn(2+)</name>
        <dbReference type="ChEBI" id="CHEBI:29105"/>
        <label>2</label>
    </ligand>
</feature>
<feature type="binding site" evidence="1">
    <location>
        <position position="900"/>
    </location>
    <ligand>
        <name>Zn(2+)</name>
        <dbReference type="ChEBI" id="CHEBI:29105"/>
        <label>2</label>
    </ligand>
</feature>
<feature type="binding site" evidence="1">
    <location>
        <position position="903"/>
    </location>
    <ligand>
        <name>Zn(2+)</name>
        <dbReference type="ChEBI" id="CHEBI:29105"/>
        <label>2</label>
    </ligand>
</feature>
<evidence type="ECO:0000255" key="1">
    <source>
        <dbReference type="HAMAP-Rule" id="MF_01322"/>
    </source>
</evidence>
<evidence type="ECO:0000256" key="2">
    <source>
        <dbReference type="SAM" id="MobiDB-lite"/>
    </source>
</evidence>
<dbReference type="EC" id="2.7.7.6" evidence="1"/>
<dbReference type="EMBL" id="CP000151">
    <property type="protein sequence ID" value="ABB07042.1"/>
    <property type="molecule type" value="Genomic_DNA"/>
</dbReference>
<dbReference type="RefSeq" id="WP_011350671.1">
    <property type="nucleotide sequence ID" value="NC_007510.1"/>
</dbReference>
<dbReference type="SMR" id="Q39KH4"/>
<dbReference type="GeneID" id="45093357"/>
<dbReference type="KEGG" id="bur:Bcep18194_A3440"/>
<dbReference type="PATRIC" id="fig|482957.22.peg.280"/>
<dbReference type="HOGENOM" id="CLU_000524_3_1_4"/>
<dbReference type="Proteomes" id="UP000002705">
    <property type="component" value="Chromosome 1"/>
</dbReference>
<dbReference type="GO" id="GO:0000428">
    <property type="term" value="C:DNA-directed RNA polymerase complex"/>
    <property type="evidence" value="ECO:0007669"/>
    <property type="project" value="UniProtKB-KW"/>
</dbReference>
<dbReference type="GO" id="GO:0003677">
    <property type="term" value="F:DNA binding"/>
    <property type="evidence" value="ECO:0007669"/>
    <property type="project" value="UniProtKB-UniRule"/>
</dbReference>
<dbReference type="GO" id="GO:0003899">
    <property type="term" value="F:DNA-directed RNA polymerase activity"/>
    <property type="evidence" value="ECO:0007669"/>
    <property type="project" value="UniProtKB-UniRule"/>
</dbReference>
<dbReference type="GO" id="GO:0000287">
    <property type="term" value="F:magnesium ion binding"/>
    <property type="evidence" value="ECO:0007669"/>
    <property type="project" value="UniProtKB-UniRule"/>
</dbReference>
<dbReference type="GO" id="GO:0008270">
    <property type="term" value="F:zinc ion binding"/>
    <property type="evidence" value="ECO:0007669"/>
    <property type="project" value="UniProtKB-UniRule"/>
</dbReference>
<dbReference type="GO" id="GO:0006351">
    <property type="term" value="P:DNA-templated transcription"/>
    <property type="evidence" value="ECO:0007669"/>
    <property type="project" value="UniProtKB-UniRule"/>
</dbReference>
<dbReference type="CDD" id="cd02655">
    <property type="entry name" value="RNAP_beta'_C"/>
    <property type="match status" value="1"/>
</dbReference>
<dbReference type="CDD" id="cd01609">
    <property type="entry name" value="RNAP_beta'_N"/>
    <property type="match status" value="1"/>
</dbReference>
<dbReference type="FunFam" id="1.10.132.30:FF:000003">
    <property type="entry name" value="DNA-directed RNA polymerase subunit beta"/>
    <property type="match status" value="1"/>
</dbReference>
<dbReference type="FunFam" id="1.10.150.390:FF:000002">
    <property type="entry name" value="DNA-directed RNA polymerase subunit beta"/>
    <property type="match status" value="1"/>
</dbReference>
<dbReference type="FunFam" id="4.10.860.120:FF:000001">
    <property type="entry name" value="DNA-directed RNA polymerase subunit beta"/>
    <property type="match status" value="1"/>
</dbReference>
<dbReference type="Gene3D" id="1.10.132.30">
    <property type="match status" value="1"/>
</dbReference>
<dbReference type="Gene3D" id="1.10.150.390">
    <property type="match status" value="1"/>
</dbReference>
<dbReference type="Gene3D" id="1.10.1790.20">
    <property type="match status" value="1"/>
</dbReference>
<dbReference type="Gene3D" id="1.10.40.90">
    <property type="match status" value="1"/>
</dbReference>
<dbReference type="Gene3D" id="2.40.40.20">
    <property type="match status" value="1"/>
</dbReference>
<dbReference type="Gene3D" id="2.40.50.100">
    <property type="match status" value="3"/>
</dbReference>
<dbReference type="Gene3D" id="4.10.860.120">
    <property type="entry name" value="RNA polymerase II, clamp domain"/>
    <property type="match status" value="1"/>
</dbReference>
<dbReference type="Gene3D" id="1.10.274.100">
    <property type="entry name" value="RNA polymerase Rpb1, domain 3"/>
    <property type="match status" value="1"/>
</dbReference>
<dbReference type="HAMAP" id="MF_01322">
    <property type="entry name" value="RNApol_bact_RpoC"/>
    <property type="match status" value="1"/>
</dbReference>
<dbReference type="InterPro" id="IPR045867">
    <property type="entry name" value="DNA-dir_RpoC_beta_prime"/>
</dbReference>
<dbReference type="InterPro" id="IPR012754">
    <property type="entry name" value="DNA-dir_RpoC_beta_prime_bact"/>
</dbReference>
<dbReference type="InterPro" id="IPR000722">
    <property type="entry name" value="RNA_pol_asu"/>
</dbReference>
<dbReference type="InterPro" id="IPR006592">
    <property type="entry name" value="RNA_pol_N"/>
</dbReference>
<dbReference type="InterPro" id="IPR007080">
    <property type="entry name" value="RNA_pol_Rpb1_1"/>
</dbReference>
<dbReference type="InterPro" id="IPR007066">
    <property type="entry name" value="RNA_pol_Rpb1_3"/>
</dbReference>
<dbReference type="InterPro" id="IPR042102">
    <property type="entry name" value="RNA_pol_Rpb1_3_sf"/>
</dbReference>
<dbReference type="InterPro" id="IPR007083">
    <property type="entry name" value="RNA_pol_Rpb1_4"/>
</dbReference>
<dbReference type="InterPro" id="IPR007081">
    <property type="entry name" value="RNA_pol_Rpb1_5"/>
</dbReference>
<dbReference type="InterPro" id="IPR044893">
    <property type="entry name" value="RNA_pol_Rpb1_clamp_domain"/>
</dbReference>
<dbReference type="InterPro" id="IPR038120">
    <property type="entry name" value="Rpb1_funnel_sf"/>
</dbReference>
<dbReference type="NCBIfam" id="TIGR02386">
    <property type="entry name" value="rpoC_TIGR"/>
    <property type="match status" value="1"/>
</dbReference>
<dbReference type="PANTHER" id="PTHR19376">
    <property type="entry name" value="DNA-DIRECTED RNA POLYMERASE"/>
    <property type="match status" value="1"/>
</dbReference>
<dbReference type="PANTHER" id="PTHR19376:SF54">
    <property type="entry name" value="DNA-DIRECTED RNA POLYMERASE SUBUNIT BETA"/>
    <property type="match status" value="1"/>
</dbReference>
<dbReference type="Pfam" id="PF04997">
    <property type="entry name" value="RNA_pol_Rpb1_1"/>
    <property type="match status" value="1"/>
</dbReference>
<dbReference type="Pfam" id="PF00623">
    <property type="entry name" value="RNA_pol_Rpb1_2"/>
    <property type="match status" value="2"/>
</dbReference>
<dbReference type="Pfam" id="PF04983">
    <property type="entry name" value="RNA_pol_Rpb1_3"/>
    <property type="match status" value="1"/>
</dbReference>
<dbReference type="Pfam" id="PF05000">
    <property type="entry name" value="RNA_pol_Rpb1_4"/>
    <property type="match status" value="1"/>
</dbReference>
<dbReference type="Pfam" id="PF04998">
    <property type="entry name" value="RNA_pol_Rpb1_5"/>
    <property type="match status" value="1"/>
</dbReference>
<dbReference type="SMART" id="SM00663">
    <property type="entry name" value="RPOLA_N"/>
    <property type="match status" value="1"/>
</dbReference>
<dbReference type="SUPFAM" id="SSF64484">
    <property type="entry name" value="beta and beta-prime subunits of DNA dependent RNA-polymerase"/>
    <property type="match status" value="1"/>
</dbReference>
<organism>
    <name type="scientific">Burkholderia lata (strain ATCC 17760 / DSM 23089 / LMG 22485 / NCIMB 9086 / R18194 / 383)</name>
    <dbReference type="NCBI Taxonomy" id="482957"/>
    <lineage>
        <taxon>Bacteria</taxon>
        <taxon>Pseudomonadati</taxon>
        <taxon>Pseudomonadota</taxon>
        <taxon>Betaproteobacteria</taxon>
        <taxon>Burkholderiales</taxon>
        <taxon>Burkholderiaceae</taxon>
        <taxon>Burkholderia</taxon>
        <taxon>Burkholderia cepacia complex</taxon>
    </lineage>
</organism>
<keyword id="KW-0240">DNA-directed RNA polymerase</keyword>
<keyword id="KW-0460">Magnesium</keyword>
<keyword id="KW-0479">Metal-binding</keyword>
<keyword id="KW-0548">Nucleotidyltransferase</keyword>
<keyword id="KW-0804">Transcription</keyword>
<keyword id="KW-0808">Transferase</keyword>
<keyword id="KW-0862">Zinc</keyword>
<proteinExistence type="inferred from homology"/>
<protein>
    <recommendedName>
        <fullName evidence="1">DNA-directed RNA polymerase subunit beta'</fullName>
        <shortName evidence="1">RNAP subunit beta'</shortName>
        <ecNumber evidence="1">2.7.7.6</ecNumber>
    </recommendedName>
    <alternativeName>
        <fullName evidence="1">RNA polymerase subunit beta'</fullName>
    </alternativeName>
    <alternativeName>
        <fullName evidence="1">Transcriptase subunit beta'</fullName>
    </alternativeName>
</protein>
<reference key="1">
    <citation type="submission" date="2005-10" db="EMBL/GenBank/DDBJ databases">
        <title>Complete sequence of chromosome 1 of Burkholderia sp. 383.</title>
        <authorList>
            <consortium name="US DOE Joint Genome Institute"/>
            <person name="Copeland A."/>
            <person name="Lucas S."/>
            <person name="Lapidus A."/>
            <person name="Barry K."/>
            <person name="Detter J.C."/>
            <person name="Glavina T."/>
            <person name="Hammon N."/>
            <person name="Israni S."/>
            <person name="Pitluck S."/>
            <person name="Chain P."/>
            <person name="Malfatti S."/>
            <person name="Shin M."/>
            <person name="Vergez L."/>
            <person name="Schmutz J."/>
            <person name="Larimer F."/>
            <person name="Land M."/>
            <person name="Kyrpides N."/>
            <person name="Lykidis A."/>
            <person name="Richardson P."/>
        </authorList>
    </citation>
    <scope>NUCLEOTIDE SEQUENCE [LARGE SCALE GENOMIC DNA]</scope>
    <source>
        <strain>ATCC 17760 / DSM 23089 / LMG 22485 / NCIMB 9086 / R18194 / 383</strain>
    </source>
</reference>
<accession>Q39KH4</accession>
<name>RPOC_BURL3</name>
<comment type="function">
    <text evidence="1">DNA-dependent RNA polymerase catalyzes the transcription of DNA into RNA using the four ribonucleoside triphosphates as substrates.</text>
</comment>
<comment type="catalytic activity">
    <reaction evidence="1">
        <text>RNA(n) + a ribonucleoside 5'-triphosphate = RNA(n+1) + diphosphate</text>
        <dbReference type="Rhea" id="RHEA:21248"/>
        <dbReference type="Rhea" id="RHEA-COMP:14527"/>
        <dbReference type="Rhea" id="RHEA-COMP:17342"/>
        <dbReference type="ChEBI" id="CHEBI:33019"/>
        <dbReference type="ChEBI" id="CHEBI:61557"/>
        <dbReference type="ChEBI" id="CHEBI:140395"/>
        <dbReference type="EC" id="2.7.7.6"/>
    </reaction>
</comment>
<comment type="cofactor">
    <cofactor evidence="1">
        <name>Mg(2+)</name>
        <dbReference type="ChEBI" id="CHEBI:18420"/>
    </cofactor>
    <text evidence="1">Binds 1 Mg(2+) ion per subunit.</text>
</comment>
<comment type="cofactor">
    <cofactor evidence="1">
        <name>Zn(2+)</name>
        <dbReference type="ChEBI" id="CHEBI:29105"/>
    </cofactor>
    <text evidence="1">Binds 2 Zn(2+) ions per subunit.</text>
</comment>
<comment type="subunit">
    <text evidence="1">The RNAP catalytic core consists of 2 alpha, 1 beta, 1 beta' and 1 omega subunit. When a sigma factor is associated with the core the holoenzyme is formed, which can initiate transcription.</text>
</comment>
<comment type="similarity">
    <text evidence="1">Belongs to the RNA polymerase beta' chain family.</text>
</comment>
<sequence>MKALLDLFKQVQQEEVFDAIKIGLASPDKIRSWSFGEVKKPETINYRTFKPERDGLFCAKIFGPIKDYECLCGKYKRLKHRGVICEKCGVEVTLAKVRRERMGHIELASPVAHIWFLKSLPSRLGMVLDMTLRDIERVLYFEAYVVIEPGMTPLKARQIMTEEDYYNKVEEYGDEFRAEMGAEGVRELLRAINIDEQVETLRTELKNTGSEAKIKKYAKRLKVLEAFQRSGIKPEWMILEVLPVLPPELRPLVPLDGGRFATSDLNDLYRRVINRNNRLKRLLELKAPEIIVRNEKRMLQEAVDSLLDNGRRGKAMTGANKRPLKSLADMIKGKGGRFRQNLLGKRVDYSGRSVIVVGPTLKLHQCGLPKLMALELFKPFIFNKLEVMGVATTIKAAKKEVENQTAVVWDILEEVIREHPVMLNRAPTLHRLGIQAFEPVLIEGKAIQLHPLVCAAFNADFDGDQMAVHVPLSLEAQMEARTLMLASNNVLFPANGDPSIVPSQDIVLGLYYATREAVNGKGEGLSFTGVSEVIRAYENKEVELASRVNVRITEMVHNEDTSEGAPPFVPKISLYATTVGRAILSEILPHGLPFSVLNKPLKKKEISRLINTAFRKCGLRATVVFADQLMQSGFRLATRAGISICVDDMLVPPQKETIVGDAAKKVKEYDRQYMSGLVTAQERYNNVVDIWSATSEAVGKAMMEQLSTEPVTDRDGKETRQESFNSIYMMADSGARGSAVQIRQLAGMRGLMAKPDGSIIETPITANFREGLNVLQYFISTHGARKGLADTALKTANSGYLTRRLVDVTQDLVVVEDDCGTSNGVAMKALVEGGEVVEALRDRILGRVAVADVVNPETQETVYESGTLLDETAVEEIERLGIDEVRVRTPLTCETRYGLCAACYGRDLGRGSLVNVGEAVGVIAAQSIGEPGTQLTMRTFHIGGAASRAAVASSVEAKSNGIVRFTATMRYVTNAKGEQIVISRSGEAMITDDFGRERERHKVPYGATLLQLDGVTIKAGTQLATWDPLTRPIITEYGGTVKFENVEEGVTVAKQIDDVTGLSTLVVIDVKRRGSQASKSVRPQVKLLDANGDEVKIPGTEHAVQIGFQVGALITVKDGQQVQVGEVLARIPTEAQKTRDITGGLPRVAELFEARSPKDAGILAEVTGTTSFGKDTKGKQRLVITDLEGNQHEFLIAKEKQVLVHDAQVVNKGEMIVDGPADPHDILRLQGIEALSRYIVDEVQDVYRLQGVKINDKHIEVIVRQMLRRVQITDNGDTRFIPGEQVERSDMLDENDRMIAEDKRPASYDNVLLGITKASLSTDSFISAASFQETTRVLTEAAIMGKRDDLRGLKENVIVGRLIPAGTGLAFHKARKAKESSDRERFDQIAAEEAFDFGTPSAPAEEPQQHPAAE</sequence>
<gene>
    <name evidence="1" type="primary">rpoC</name>
    <name type="ordered locus">Bcep18194_A3440</name>
</gene>